<comment type="subcellular location">
    <subcellularLocation>
        <location evidence="1">Cell inner membrane</location>
        <topology evidence="1">Multi-pass membrane protein</topology>
    </subcellularLocation>
</comment>
<comment type="similarity">
    <text evidence="1">Belongs to the UPF0761 family.</text>
</comment>
<name>YIHY_SALPB</name>
<proteinExistence type="inferred from homology"/>
<feature type="chain" id="PRO_1000082949" description="UPF0761 membrane protein YihY">
    <location>
        <begin position="1"/>
        <end position="290"/>
    </location>
</feature>
<feature type="transmembrane region" description="Helical" evidence="1">
    <location>
        <begin position="44"/>
        <end position="64"/>
    </location>
</feature>
<feature type="transmembrane region" description="Helical" evidence="1">
    <location>
        <begin position="104"/>
        <end position="124"/>
    </location>
</feature>
<feature type="transmembrane region" description="Helical" evidence="1">
    <location>
        <begin position="140"/>
        <end position="160"/>
    </location>
</feature>
<feature type="transmembrane region" description="Helical" evidence="1">
    <location>
        <begin position="183"/>
        <end position="203"/>
    </location>
</feature>
<feature type="transmembrane region" description="Helical" evidence="1">
    <location>
        <begin position="210"/>
        <end position="230"/>
    </location>
</feature>
<feature type="transmembrane region" description="Helical" evidence="1">
    <location>
        <begin position="244"/>
        <end position="264"/>
    </location>
</feature>
<protein>
    <recommendedName>
        <fullName evidence="1">UPF0761 membrane protein YihY</fullName>
    </recommendedName>
</protein>
<sequence>MLKTVHQKAGRHTRPVRAWLKLLWQRIDEDNMTTLAGNLAYVSLLSLVPLIAVVFALFAAFPMFSDVSIQLRHFIFANFMPATGDVIQRYIEQFVANSNKMTAVGACGLIVTALLLMYAIDSALNTIWRSKRTRPKVYSFAVYWMILTLGPLLAGASLAISSYLLSLRWASDLNTVIDNVLRILPLLLSWISFWLLYSIVPTTRVPNRDALVGAFVAALLFESGKKGFALYITMFPSYQLIYGVLAVIPILFVWVYWTWCIVLLGAEITVTLGEYRKLKQAAEQEEADQP</sequence>
<organism>
    <name type="scientific">Salmonella paratyphi B (strain ATCC BAA-1250 / SPB7)</name>
    <dbReference type="NCBI Taxonomy" id="1016998"/>
    <lineage>
        <taxon>Bacteria</taxon>
        <taxon>Pseudomonadati</taxon>
        <taxon>Pseudomonadota</taxon>
        <taxon>Gammaproteobacteria</taxon>
        <taxon>Enterobacterales</taxon>
        <taxon>Enterobacteriaceae</taxon>
        <taxon>Salmonella</taxon>
    </lineage>
</organism>
<reference key="1">
    <citation type="submission" date="2007-11" db="EMBL/GenBank/DDBJ databases">
        <authorList>
            <consortium name="The Salmonella enterica serovar Paratyphi B Genome Sequencing Project"/>
            <person name="McClelland M."/>
            <person name="Sanderson E.K."/>
            <person name="Porwollik S."/>
            <person name="Spieth J."/>
            <person name="Clifton W.S."/>
            <person name="Fulton R."/>
            <person name="Cordes M."/>
            <person name="Wollam A."/>
            <person name="Shah N."/>
            <person name="Pepin K."/>
            <person name="Bhonagiri V."/>
            <person name="Nash W."/>
            <person name="Johnson M."/>
            <person name="Thiruvilangam P."/>
            <person name="Wilson R."/>
        </authorList>
    </citation>
    <scope>NUCLEOTIDE SEQUENCE [LARGE SCALE GENOMIC DNA]</scope>
    <source>
        <strain>ATCC BAA-1250 / SPB7</strain>
    </source>
</reference>
<gene>
    <name evidence="1" type="primary">yihY</name>
    <name type="ordered locus">SPAB_04987</name>
</gene>
<accession>A9MZA1</accession>
<keyword id="KW-0997">Cell inner membrane</keyword>
<keyword id="KW-1003">Cell membrane</keyword>
<keyword id="KW-0472">Membrane</keyword>
<keyword id="KW-0812">Transmembrane</keyword>
<keyword id="KW-1133">Transmembrane helix</keyword>
<evidence type="ECO:0000255" key="1">
    <source>
        <dbReference type="HAMAP-Rule" id="MF_00672"/>
    </source>
</evidence>
<dbReference type="EMBL" id="CP000886">
    <property type="protein sequence ID" value="ABX70279.1"/>
    <property type="molecule type" value="Genomic_DNA"/>
</dbReference>
<dbReference type="RefSeq" id="WP_000921424.1">
    <property type="nucleotide sequence ID" value="NC_010102.1"/>
</dbReference>
<dbReference type="KEGG" id="spq:SPAB_04987"/>
<dbReference type="PATRIC" id="fig|1016998.12.peg.4679"/>
<dbReference type="HOGENOM" id="CLU_032288_0_0_6"/>
<dbReference type="BioCyc" id="SENT1016998:SPAB_RS20285-MONOMER"/>
<dbReference type="Proteomes" id="UP000008556">
    <property type="component" value="Chromosome"/>
</dbReference>
<dbReference type="GO" id="GO:0005886">
    <property type="term" value="C:plasma membrane"/>
    <property type="evidence" value="ECO:0007669"/>
    <property type="project" value="UniProtKB-SubCell"/>
</dbReference>
<dbReference type="HAMAP" id="MF_00672">
    <property type="entry name" value="UPF0761"/>
    <property type="match status" value="1"/>
</dbReference>
<dbReference type="InterPro" id="IPR023679">
    <property type="entry name" value="UPF0761_bac"/>
</dbReference>
<dbReference type="InterPro" id="IPR017039">
    <property type="entry name" value="Virul_fac_BrkB"/>
</dbReference>
<dbReference type="NCBIfam" id="NF002457">
    <property type="entry name" value="PRK01637.1"/>
    <property type="match status" value="1"/>
</dbReference>
<dbReference type="NCBIfam" id="TIGR00765">
    <property type="entry name" value="yihY_not_rbn"/>
    <property type="match status" value="1"/>
</dbReference>
<dbReference type="PANTHER" id="PTHR30213">
    <property type="entry name" value="INNER MEMBRANE PROTEIN YHJD"/>
    <property type="match status" value="1"/>
</dbReference>
<dbReference type="PANTHER" id="PTHR30213:SF0">
    <property type="entry name" value="UPF0761 MEMBRANE PROTEIN YIHY"/>
    <property type="match status" value="1"/>
</dbReference>
<dbReference type="Pfam" id="PF03631">
    <property type="entry name" value="Virul_fac_BrkB"/>
    <property type="match status" value="1"/>
</dbReference>
<dbReference type="PIRSF" id="PIRSF035875">
    <property type="entry name" value="RNase_BN"/>
    <property type="match status" value="1"/>
</dbReference>